<comment type="function">
    <text evidence="2">Major cell surface adhesion protein which mediates both yeast-to-host tissue adherence and yeast aggregation. Acts as a downstream effector of the EFG1 regulatory pathway. Required for rapamycin-induced aggregation of C.albicans. Binds glycans and mediates adherence to endothelial and epithelial cells, thereby playing an important role in the pathogenesis of C.albicans infections.</text>
</comment>
<comment type="subcellular location">
    <subcellularLocation>
        <location evidence="2">Cell membrane</location>
        <topology evidence="2">Lipid-anchor</topology>
        <topology evidence="2">GPI-anchor</topology>
    </subcellularLocation>
    <subcellularLocation>
        <location evidence="2">Secreted</location>
        <location evidence="2">Cell wall</location>
    </subcellularLocation>
    <text evidence="2">Identified as covalently-linked GPI-modified cell wall protein (GPI-CWP) in the outer cell wall layer. Covers the germ tube as well as the cell surface with the exception of bud scars.</text>
</comment>
<comment type="domain">
    <text evidence="2">Each ALS protein has a similar three-domain structure, including a N-ter domain of 433-436 amino acids that is 55-90 percent identical across the family and which mediates adherence to various materials; a central domain of variable numbers of tandemly repeated copies of a 36 amino acid motif; and a C-ter domain that is relatively variable in length and sequence across the family.</text>
</comment>
<comment type="PTM">
    <text evidence="5">N-glycosylated and O-glycosylated.</text>
</comment>
<comment type="PTM">
    <text evidence="2">The GPI-anchor is attached to the protein in the endoplasmic reticulum and serves to target the protein to the cell surface. There, the glucosamine-inositol phospholipid moiety is cleaved off and the GPI-modified mannoprotein is covalently attached via its lipidless GPI glycan remnant to the 1,6-beta-glucan of the outer cell wall layer.</text>
</comment>
<comment type="similarity">
    <text evidence="5">Belongs to the ALS family.</text>
</comment>
<dbReference type="EMBL" id="L25902">
    <property type="protein sequence ID" value="AAC41649.2"/>
    <property type="molecule type" value="Genomic_DNA"/>
</dbReference>
<dbReference type="PIR" id="S60896">
    <property type="entry name" value="S60896"/>
</dbReference>
<dbReference type="SMR" id="P46590"/>
<dbReference type="GlyCosmos" id="P46590">
    <property type="glycosylation" value="11 sites, No reported glycans"/>
</dbReference>
<dbReference type="VEuPathDB" id="FungiDB:C6_03700W_A"/>
<dbReference type="VEuPathDB" id="FungiDB:CAWG_04941"/>
<dbReference type="VEuPathDB" id="FungiDB:CAWG_05002"/>
<dbReference type="PHI-base" id="PHI:198"/>
<dbReference type="GO" id="GO:0009986">
    <property type="term" value="C:cell surface"/>
    <property type="evidence" value="ECO:0007669"/>
    <property type="project" value="TreeGrafter"/>
</dbReference>
<dbReference type="GO" id="GO:1903561">
    <property type="term" value="C:extracellular vesicle"/>
    <property type="evidence" value="ECO:0007669"/>
    <property type="project" value="TreeGrafter"/>
</dbReference>
<dbReference type="GO" id="GO:0030446">
    <property type="term" value="C:hyphal cell wall"/>
    <property type="evidence" value="ECO:0007669"/>
    <property type="project" value="TreeGrafter"/>
</dbReference>
<dbReference type="GO" id="GO:0005886">
    <property type="term" value="C:plasma membrane"/>
    <property type="evidence" value="ECO:0007669"/>
    <property type="project" value="UniProtKB-SubCell"/>
</dbReference>
<dbReference type="GO" id="GO:0098552">
    <property type="term" value="C:side of membrane"/>
    <property type="evidence" value="ECO:0007669"/>
    <property type="project" value="UniProtKB-KW"/>
</dbReference>
<dbReference type="GO" id="GO:0030445">
    <property type="term" value="C:yeast-form cell wall"/>
    <property type="evidence" value="ECO:0007669"/>
    <property type="project" value="TreeGrafter"/>
</dbReference>
<dbReference type="GO" id="GO:0044403">
    <property type="term" value="P:biological process involved in symbiotic interaction"/>
    <property type="evidence" value="ECO:0007669"/>
    <property type="project" value="UniProtKB-ARBA"/>
</dbReference>
<dbReference type="GO" id="GO:0098609">
    <property type="term" value="P:cell-cell adhesion"/>
    <property type="evidence" value="ECO:0007669"/>
    <property type="project" value="TreeGrafter"/>
</dbReference>
<dbReference type="GO" id="GO:0030448">
    <property type="term" value="P:hyphal growth"/>
    <property type="evidence" value="ECO:0007669"/>
    <property type="project" value="TreeGrafter"/>
</dbReference>
<dbReference type="FunFam" id="2.60.40.1280:FF:000001">
    <property type="entry name" value="Agglutinin-like protein 3"/>
    <property type="match status" value="1"/>
</dbReference>
<dbReference type="FunFam" id="2.60.40.2430:FF:000001">
    <property type="entry name" value="Agglutinin-like protein 3"/>
    <property type="match status" value="1"/>
</dbReference>
<dbReference type="Gene3D" id="2.60.40.1280">
    <property type="match status" value="1"/>
</dbReference>
<dbReference type="Gene3D" id="2.60.40.2430">
    <property type="entry name" value="Agglutinin-like protein, N-terminal domain, N2 subdomain"/>
    <property type="match status" value="1"/>
</dbReference>
<dbReference type="InterPro" id="IPR008966">
    <property type="entry name" value="Adhesion_dom_sf"/>
</dbReference>
<dbReference type="InterPro" id="IPR008440">
    <property type="entry name" value="Agglutinin-like_ALS_rpt"/>
</dbReference>
<dbReference type="InterPro" id="IPR024672">
    <property type="entry name" value="Agglutinin-like_N"/>
</dbReference>
<dbReference type="InterPro" id="IPR043063">
    <property type="entry name" value="Agglutinin-like_N_N2"/>
</dbReference>
<dbReference type="InterPro" id="IPR033504">
    <property type="entry name" value="ALS"/>
</dbReference>
<dbReference type="InterPro" id="IPR011252">
    <property type="entry name" value="Fibrogen-bd_dom1"/>
</dbReference>
<dbReference type="PANTHER" id="PTHR33793:SF2">
    <property type="entry name" value="AGGLUTININ-LIKE PROTEIN 6"/>
    <property type="match status" value="1"/>
</dbReference>
<dbReference type="PANTHER" id="PTHR33793">
    <property type="entry name" value="ALPHA-AGGLUTININ"/>
    <property type="match status" value="1"/>
</dbReference>
<dbReference type="Pfam" id="PF05792">
    <property type="entry name" value="Candida_ALS"/>
    <property type="match status" value="12"/>
</dbReference>
<dbReference type="Pfam" id="PF11766">
    <property type="entry name" value="Candida_ALS_N"/>
    <property type="match status" value="1"/>
</dbReference>
<dbReference type="SMART" id="SM01056">
    <property type="entry name" value="Candida_ALS_N"/>
    <property type="match status" value="1"/>
</dbReference>
<dbReference type="SUPFAM" id="SSF49401">
    <property type="entry name" value="Bacterial adhesins"/>
    <property type="match status" value="1"/>
</dbReference>
<evidence type="ECO:0000250" key="1">
    <source>
        <dbReference type="UniProtKB" id="A0A1D8PQ86"/>
    </source>
</evidence>
<evidence type="ECO:0000250" key="2">
    <source>
        <dbReference type="UniProtKB" id="Q5A8T4"/>
    </source>
</evidence>
<evidence type="ECO:0000255" key="3"/>
<evidence type="ECO:0000256" key="4">
    <source>
        <dbReference type="SAM" id="MobiDB-lite"/>
    </source>
</evidence>
<evidence type="ECO:0000305" key="5"/>
<organism>
    <name type="scientific">Candida albicans</name>
    <name type="common">Yeast</name>
    <dbReference type="NCBI Taxonomy" id="5476"/>
    <lineage>
        <taxon>Eukaryota</taxon>
        <taxon>Fungi</taxon>
        <taxon>Dikarya</taxon>
        <taxon>Ascomycota</taxon>
        <taxon>Saccharomycotina</taxon>
        <taxon>Pichiomycetes</taxon>
        <taxon>Debaryomycetaceae</taxon>
        <taxon>Candida/Lodderomyces clade</taxon>
        <taxon>Candida</taxon>
    </lineage>
</organism>
<keyword id="KW-0130">Cell adhesion</keyword>
<keyword id="KW-1003">Cell membrane</keyword>
<keyword id="KW-0134">Cell wall</keyword>
<keyword id="KW-1015">Disulfide bond</keyword>
<keyword id="KW-0325">Glycoprotein</keyword>
<keyword id="KW-0336">GPI-anchor</keyword>
<keyword id="KW-0449">Lipoprotein</keyword>
<keyword id="KW-0472">Membrane</keyword>
<keyword id="KW-0677">Repeat</keyword>
<keyword id="KW-0964">Secreted</keyword>
<keyword id="KW-0732">Signal</keyword>
<keyword id="KW-0843">Virulence</keyword>
<accession>P46590</accession>
<feature type="signal peptide" evidence="3">
    <location>
        <begin position="1"/>
        <end position="17"/>
    </location>
</feature>
<feature type="chain" id="PRO_0000020691" description="Agglutinin-like protein 1">
    <location>
        <begin position="18"/>
        <end position="1260"/>
    </location>
</feature>
<feature type="repeat" description="1-1">
    <location>
        <begin position="433"/>
        <end position="468"/>
    </location>
</feature>
<feature type="repeat" description="1-2">
    <location>
        <begin position="469"/>
        <end position="504"/>
    </location>
</feature>
<feature type="repeat" description="1-3">
    <location>
        <begin position="505"/>
        <end position="540"/>
    </location>
</feature>
<feature type="repeat" description="1-4">
    <location>
        <begin position="541"/>
        <end position="576"/>
    </location>
</feature>
<feature type="repeat" description="1-5">
    <location>
        <begin position="577"/>
        <end position="612"/>
    </location>
</feature>
<feature type="repeat" description="1-6">
    <location>
        <begin position="613"/>
        <end position="648"/>
    </location>
</feature>
<feature type="repeat" description="1-7">
    <location>
        <begin position="649"/>
        <end position="684"/>
    </location>
</feature>
<feature type="repeat" description="1-8">
    <location>
        <begin position="685"/>
        <end position="720"/>
    </location>
</feature>
<feature type="repeat" description="1-9">
    <location>
        <begin position="721"/>
        <end position="756"/>
    </location>
</feature>
<feature type="repeat" description="1-10">
    <location>
        <begin position="757"/>
        <end position="792"/>
    </location>
</feature>
<feature type="repeat" description="2-1">
    <location>
        <begin position="983"/>
        <end position="1043"/>
    </location>
</feature>
<feature type="repeat" description="2-2">
    <location>
        <begin position="1092"/>
        <end position="1152"/>
    </location>
</feature>
<feature type="region of interest" description="10 X 36 AA tandem repeats">
    <location>
        <begin position="433"/>
        <end position="792"/>
    </location>
</feature>
<feature type="region of interest" description="Disordered" evidence="4">
    <location>
        <begin position="896"/>
        <end position="924"/>
    </location>
</feature>
<feature type="region of interest" description="Disordered" evidence="4">
    <location>
        <begin position="954"/>
        <end position="1226"/>
    </location>
</feature>
<feature type="region of interest" description="2 X 26 AA approximate repeats">
    <location>
        <begin position="983"/>
        <end position="1152"/>
    </location>
</feature>
<feature type="compositionally biased region" description="Polar residues" evidence="4">
    <location>
        <begin position="896"/>
        <end position="918"/>
    </location>
</feature>
<feature type="compositionally biased region" description="Polar residues" evidence="4">
    <location>
        <begin position="964"/>
        <end position="979"/>
    </location>
</feature>
<feature type="compositionally biased region" description="Low complexity" evidence="4">
    <location>
        <begin position="980"/>
        <end position="995"/>
    </location>
</feature>
<feature type="compositionally biased region" description="Polar residues" evidence="4">
    <location>
        <begin position="1002"/>
        <end position="1062"/>
    </location>
</feature>
<feature type="compositionally biased region" description="Polar residues" evidence="4">
    <location>
        <begin position="1073"/>
        <end position="1090"/>
    </location>
</feature>
<feature type="compositionally biased region" description="Low complexity" evidence="4">
    <location>
        <begin position="1091"/>
        <end position="1110"/>
    </location>
</feature>
<feature type="compositionally biased region" description="Polar residues" evidence="4">
    <location>
        <begin position="1111"/>
        <end position="1154"/>
    </location>
</feature>
<feature type="compositionally biased region" description="Low complexity" evidence="4">
    <location>
        <begin position="1155"/>
        <end position="1176"/>
    </location>
</feature>
<feature type="compositionally biased region" description="Low complexity" evidence="4">
    <location>
        <begin position="1197"/>
        <end position="1226"/>
    </location>
</feature>
<feature type="glycosylation site" description="N-linked (GlcNAc...) asparagine" evidence="3">
    <location>
        <position position="471"/>
    </location>
</feature>
<feature type="glycosylation site" description="N-linked (GlcNAc...) asparagine" evidence="3">
    <location>
        <position position="579"/>
    </location>
</feature>
<feature type="glycosylation site" description="N-linked (GlcNAc...) asparagine" evidence="3">
    <location>
        <position position="615"/>
    </location>
</feature>
<feature type="glycosylation site" description="N-linked (GlcNAc...) asparagine" evidence="3">
    <location>
        <position position="687"/>
    </location>
</feature>
<feature type="glycosylation site" description="N-linked (GlcNAc...) asparagine" evidence="3">
    <location>
        <position position="723"/>
    </location>
</feature>
<feature type="glycosylation site" description="N-linked (GlcNAc...) asparagine" evidence="3">
    <location>
        <position position="820"/>
    </location>
</feature>
<feature type="glycosylation site" description="N-linked (GlcNAc...) asparagine" evidence="3">
    <location>
        <position position="886"/>
    </location>
</feature>
<feature type="glycosylation site" description="N-linked (GlcNAc...) asparagine" evidence="3">
    <location>
        <position position="918"/>
    </location>
</feature>
<feature type="glycosylation site" description="N-linked (GlcNAc...) asparagine" evidence="3">
    <location>
        <position position="973"/>
    </location>
</feature>
<feature type="glycosylation site" description="N-linked (GlcNAc...) asparagine" evidence="3">
    <location>
        <position position="1045"/>
    </location>
</feature>
<feature type="glycosylation site" description="N-linked (GlcNAc...) asparagine" evidence="3">
    <location>
        <position position="1068"/>
    </location>
</feature>
<feature type="disulfide bond" evidence="1">
    <location>
        <begin position="73"/>
        <end position="150"/>
    </location>
</feature>
<feature type="disulfide bond" evidence="1">
    <location>
        <begin position="96"/>
        <end position="112"/>
    </location>
</feature>
<feature type="disulfide bond" evidence="1">
    <location>
        <begin position="205"/>
        <end position="298"/>
    </location>
</feature>
<feature type="disulfide bond" evidence="1">
    <location>
        <begin position="227"/>
        <end position="256"/>
    </location>
</feature>
<name>ALS1_CANAX</name>
<reference key="1">
    <citation type="journal article" date="1995" name="Mol. Microbiol.">
        <title>Candida albicans ALS1: domains related to a Saccharomyces cerevisiae sexual agglutinin separated by a repeating motif.</title>
        <authorList>
            <person name="Hoyer L.L."/>
            <person name="Scherer S."/>
            <person name="Shatzman A.R."/>
            <person name="Livi G.P."/>
        </authorList>
    </citation>
    <scope>NUCLEOTIDE SEQUENCE [GENOMIC DNA]</scope>
    <source>
        <strain>ATCC 11651 / B792 / 171D</strain>
    </source>
</reference>
<proteinExistence type="inferred from homology"/>
<gene>
    <name type="primary">ALS1</name>
</gene>
<sequence>MLQQFTLLFLYLSIASAKTITGVFDSFNSLTWSNAANYAFKGPGYPTWNAVLGWSLDGTSANPGDTFTLNMPCVFKYTTSQTSVDLTADGVKYATCQFYSGEEFTTFSTLTCTVNDALKSSIKAFGTVTLPIAFNVGGTGSSTDLEDSKCFTAGTNTVTFNDGDKDISIDVEFEKSTVDPSAYLYASRVMPSLNKVTTLFVAPQCENGYTSGTMGFSSSNGDVAIDCSNIHIGITKGLNDWNYPVSSESFSYTKTCTSNGIQIKYQNVPAGYRPFIDAYISATDVNQYTLAYTNDYTCAGSRSQSKPFTLRWTGYKNSDAGSNGIVIVATTRTVTDSTTAVTTLPFNPSVDKTKTIEILQPIPTTTITTSYVGVTTSYSTKTAPIGETATVIVDVPYHTTTTVTSEWTGTITTTTTRTNPTDSIDTVVVQVPSPNPTVSTTEYWSQSFATTTTVTAPPGGTDTVIIREPPNHTVTTTEYWSQSFATTTTVTAPPGGTDSVIIREPPNPTVTTTEYWSQSFATTTTVTAPPGGTDSVIIREPPNPTVTTTEYWSQSYATTTTVTAPPGGTDSVIIREPPNHTVTTTEYWSQSYATTTTVTAPPGGTDTVIIREPPNHTVTTTEYWSQSFATTTTVTGPPSGTDTVIIREPPNPTVTTTEYWSQSYATTTTITAPPGETDTVLIREPPNHTVTTTEYWSQSYATTTTVTAPPGETDTVLIREPPNHTVTTTEYWSQSYATTTTVTAPPGGTDTVIIREPPNPTVTTTEYWSQSFATTTTVTAPPGGTDTVIIYESMSSSKISTSSNDITSIIPSFSRPHYVNSTTSDLSTFESSSMNTPTSISSDGMLLSSTTLVTESETTTESICSDGKECSRLSSSSGIVTNPDSNESSIVTSTVPTASTMSDSLSSTDGISATSSDNVSKSGVSVTTETSVTTIQTTPNPLSSSVTSLTQLSSIPSVSESESKVTFTSNGDNQSGTHDSQSTSTEIEIVTTSSTKVLPPVVSSNTDLTSEPTNTREQPTTLSTTSNSITEDITTSQPTGDNGDNTSSTNPVPTVATSTLASASEEDNKSGSHESASTSLKPSMGENSGLTTSTEIEATTTSPTEAPSPAVSSGTDVTTEPTDTREQPTTLSTTSKTNSESVATTQATNENGGKSPSTDLTSSLTTGTSASTSANSELVTSGSVTGGAVASASNDQSHSTSVTNSNSIVSNTPQTTLSQQVTSSSPSTNTFIASTYDGSGSIIQHSTWLYGLITLLSLFI</sequence>
<protein>
    <recommendedName>
        <fullName>Agglutinin-like protein 1</fullName>
    </recommendedName>
    <alternativeName>
        <fullName>Adhesin 1</fullName>
    </alternativeName>
</protein>